<sequence length="156" mass="17460">MKLQLIAVGTRMPDWVTRGFEEYQRRFPRDMALELIEIPAGKRGKNADIVRILQKEGEQMLAAIPKGNHIVSLDLPGKNWTTPELATALTKWQLDGRDVSLLIGGPEGLAPACKEAANQSWCLSALTLPHPLVRVVVAESLYRAWSVNTNHPYHRE</sequence>
<feature type="chain" id="PRO_1000082813" description="Ribosomal RNA large subunit methyltransferase H">
    <location>
        <begin position="1"/>
        <end position="156"/>
    </location>
</feature>
<feature type="binding site" evidence="1">
    <location>
        <position position="73"/>
    </location>
    <ligand>
        <name>S-adenosyl-L-methionine</name>
        <dbReference type="ChEBI" id="CHEBI:59789"/>
    </ligand>
</feature>
<feature type="binding site" evidence="1">
    <location>
        <position position="104"/>
    </location>
    <ligand>
        <name>S-adenosyl-L-methionine</name>
        <dbReference type="ChEBI" id="CHEBI:59789"/>
    </ligand>
</feature>
<feature type="binding site" evidence="1">
    <location>
        <begin position="123"/>
        <end position="128"/>
    </location>
    <ligand>
        <name>S-adenosyl-L-methionine</name>
        <dbReference type="ChEBI" id="CHEBI:59789"/>
    </ligand>
</feature>
<gene>
    <name evidence="1" type="primary">rlmH</name>
    <name type="ordered locus">Sbal195_3452</name>
</gene>
<proteinExistence type="inferred from homology"/>
<accession>A9L006</accession>
<keyword id="KW-0963">Cytoplasm</keyword>
<keyword id="KW-0489">Methyltransferase</keyword>
<keyword id="KW-0698">rRNA processing</keyword>
<keyword id="KW-0949">S-adenosyl-L-methionine</keyword>
<keyword id="KW-0808">Transferase</keyword>
<reference key="1">
    <citation type="submission" date="2007-11" db="EMBL/GenBank/DDBJ databases">
        <title>Complete sequence of chromosome of Shewanella baltica OS195.</title>
        <authorList>
            <consortium name="US DOE Joint Genome Institute"/>
            <person name="Copeland A."/>
            <person name="Lucas S."/>
            <person name="Lapidus A."/>
            <person name="Barry K."/>
            <person name="Glavina del Rio T."/>
            <person name="Dalin E."/>
            <person name="Tice H."/>
            <person name="Pitluck S."/>
            <person name="Chain P."/>
            <person name="Malfatti S."/>
            <person name="Shin M."/>
            <person name="Vergez L."/>
            <person name="Schmutz J."/>
            <person name="Larimer F."/>
            <person name="Land M."/>
            <person name="Hauser L."/>
            <person name="Kyrpides N."/>
            <person name="Kim E."/>
            <person name="Brettar I."/>
            <person name="Rodrigues J."/>
            <person name="Konstantinidis K."/>
            <person name="Klappenbach J."/>
            <person name="Hofle M."/>
            <person name="Tiedje J."/>
            <person name="Richardson P."/>
        </authorList>
    </citation>
    <scope>NUCLEOTIDE SEQUENCE [LARGE SCALE GENOMIC DNA]</scope>
    <source>
        <strain>OS195</strain>
    </source>
</reference>
<organism>
    <name type="scientific">Shewanella baltica (strain OS195)</name>
    <dbReference type="NCBI Taxonomy" id="399599"/>
    <lineage>
        <taxon>Bacteria</taxon>
        <taxon>Pseudomonadati</taxon>
        <taxon>Pseudomonadota</taxon>
        <taxon>Gammaproteobacteria</taxon>
        <taxon>Alteromonadales</taxon>
        <taxon>Shewanellaceae</taxon>
        <taxon>Shewanella</taxon>
    </lineage>
</organism>
<protein>
    <recommendedName>
        <fullName evidence="1">Ribosomal RNA large subunit methyltransferase H</fullName>
        <ecNumber evidence="1">2.1.1.177</ecNumber>
    </recommendedName>
    <alternativeName>
        <fullName evidence="1">23S rRNA (pseudouridine1915-N3)-methyltransferase</fullName>
    </alternativeName>
    <alternativeName>
        <fullName evidence="1">23S rRNA m3Psi1915 methyltransferase</fullName>
    </alternativeName>
    <alternativeName>
        <fullName evidence="1">rRNA (pseudouridine-N3-)-methyltransferase RlmH</fullName>
    </alternativeName>
</protein>
<comment type="function">
    <text evidence="1">Specifically methylates the pseudouridine at position 1915 (m3Psi1915) in 23S rRNA.</text>
</comment>
<comment type="catalytic activity">
    <reaction evidence="1">
        <text>pseudouridine(1915) in 23S rRNA + S-adenosyl-L-methionine = N(3)-methylpseudouridine(1915) in 23S rRNA + S-adenosyl-L-homocysteine + H(+)</text>
        <dbReference type="Rhea" id="RHEA:42752"/>
        <dbReference type="Rhea" id="RHEA-COMP:10221"/>
        <dbReference type="Rhea" id="RHEA-COMP:10222"/>
        <dbReference type="ChEBI" id="CHEBI:15378"/>
        <dbReference type="ChEBI" id="CHEBI:57856"/>
        <dbReference type="ChEBI" id="CHEBI:59789"/>
        <dbReference type="ChEBI" id="CHEBI:65314"/>
        <dbReference type="ChEBI" id="CHEBI:74486"/>
        <dbReference type="EC" id="2.1.1.177"/>
    </reaction>
</comment>
<comment type="subunit">
    <text evidence="1">Homodimer.</text>
</comment>
<comment type="subcellular location">
    <subcellularLocation>
        <location evidence="1">Cytoplasm</location>
    </subcellularLocation>
</comment>
<comment type="similarity">
    <text evidence="1">Belongs to the RNA methyltransferase RlmH family.</text>
</comment>
<evidence type="ECO:0000255" key="1">
    <source>
        <dbReference type="HAMAP-Rule" id="MF_00658"/>
    </source>
</evidence>
<dbReference type="EC" id="2.1.1.177" evidence="1"/>
<dbReference type="EMBL" id="CP000891">
    <property type="protein sequence ID" value="ABX50614.1"/>
    <property type="molecule type" value="Genomic_DNA"/>
</dbReference>
<dbReference type="RefSeq" id="WP_006082752.1">
    <property type="nucleotide sequence ID" value="NC_009997.1"/>
</dbReference>
<dbReference type="SMR" id="A9L006"/>
<dbReference type="GeneID" id="11774932"/>
<dbReference type="KEGG" id="sbn:Sbal195_3452"/>
<dbReference type="HOGENOM" id="CLU_100552_1_0_6"/>
<dbReference type="Proteomes" id="UP000000770">
    <property type="component" value="Chromosome"/>
</dbReference>
<dbReference type="GO" id="GO:0005737">
    <property type="term" value="C:cytoplasm"/>
    <property type="evidence" value="ECO:0007669"/>
    <property type="project" value="UniProtKB-SubCell"/>
</dbReference>
<dbReference type="GO" id="GO:0070038">
    <property type="term" value="F:rRNA (pseudouridine-N3-)-methyltransferase activity"/>
    <property type="evidence" value="ECO:0007669"/>
    <property type="project" value="UniProtKB-UniRule"/>
</dbReference>
<dbReference type="CDD" id="cd18081">
    <property type="entry name" value="RlmH-like"/>
    <property type="match status" value="1"/>
</dbReference>
<dbReference type="Gene3D" id="3.40.1280.10">
    <property type="match status" value="1"/>
</dbReference>
<dbReference type="HAMAP" id="MF_00658">
    <property type="entry name" value="23SrRNA_methyltr_H"/>
    <property type="match status" value="1"/>
</dbReference>
<dbReference type="InterPro" id="IPR029028">
    <property type="entry name" value="Alpha/beta_knot_MTases"/>
</dbReference>
<dbReference type="InterPro" id="IPR003742">
    <property type="entry name" value="RlmH-like"/>
</dbReference>
<dbReference type="InterPro" id="IPR029026">
    <property type="entry name" value="tRNA_m1G_MTases_N"/>
</dbReference>
<dbReference type="NCBIfam" id="NF000984">
    <property type="entry name" value="PRK00103.1-1"/>
    <property type="match status" value="1"/>
</dbReference>
<dbReference type="NCBIfam" id="NF000986">
    <property type="entry name" value="PRK00103.1-4"/>
    <property type="match status" value="1"/>
</dbReference>
<dbReference type="NCBIfam" id="TIGR00246">
    <property type="entry name" value="tRNA_RlmH_YbeA"/>
    <property type="match status" value="1"/>
</dbReference>
<dbReference type="PANTHER" id="PTHR33603">
    <property type="entry name" value="METHYLTRANSFERASE"/>
    <property type="match status" value="1"/>
</dbReference>
<dbReference type="PANTHER" id="PTHR33603:SF1">
    <property type="entry name" value="RIBOSOMAL RNA LARGE SUBUNIT METHYLTRANSFERASE H"/>
    <property type="match status" value="1"/>
</dbReference>
<dbReference type="Pfam" id="PF02590">
    <property type="entry name" value="SPOUT_MTase"/>
    <property type="match status" value="1"/>
</dbReference>
<dbReference type="PIRSF" id="PIRSF004505">
    <property type="entry name" value="MT_bac"/>
    <property type="match status" value="1"/>
</dbReference>
<dbReference type="SUPFAM" id="SSF75217">
    <property type="entry name" value="alpha/beta knot"/>
    <property type="match status" value="1"/>
</dbReference>
<name>RLMH_SHEB9</name>